<gene>
    <name evidence="1" type="primary">fieF</name>
    <name type="ordered locus">SPC_4168</name>
</gene>
<protein>
    <recommendedName>
        <fullName evidence="1">Cation-efflux pump FieF</fullName>
    </recommendedName>
</protein>
<comment type="function">
    <text evidence="1">Divalent metal cation transporter which exports Zn(2+), Cd(2+) and possibly Fe(2+). May be involved in zinc and iron detoxification by efflux.</text>
</comment>
<comment type="catalytic activity">
    <reaction evidence="1">
        <text>Zn(2+)(in) + H(+)(out) = Zn(2+)(out) + H(+)(in)</text>
        <dbReference type="Rhea" id="RHEA:28839"/>
        <dbReference type="ChEBI" id="CHEBI:15378"/>
        <dbReference type="ChEBI" id="CHEBI:29105"/>
    </reaction>
</comment>
<comment type="catalytic activity">
    <reaction evidence="1">
        <text>Cd(2+)(in) + H(+)(out) = Cd(2+)(out) + H(+)(in)</text>
        <dbReference type="Rhea" id="RHEA:28739"/>
        <dbReference type="ChEBI" id="CHEBI:15378"/>
        <dbReference type="ChEBI" id="CHEBI:48775"/>
    </reaction>
</comment>
<comment type="catalytic activity">
    <reaction evidence="1">
        <text>Fe(2+)(in) + H(+)(out) = Fe(2+)(out) + H(+)(in)</text>
        <dbReference type="Rhea" id="RHEA:29439"/>
        <dbReference type="ChEBI" id="CHEBI:15378"/>
        <dbReference type="ChEBI" id="CHEBI:29033"/>
    </reaction>
</comment>
<comment type="subunit">
    <text evidence="1">Homodimer.</text>
</comment>
<comment type="subcellular location">
    <subcellularLocation>
        <location evidence="1">Cell inner membrane</location>
        <topology evidence="1">Multi-pass membrane protein</topology>
    </subcellularLocation>
</comment>
<comment type="similarity">
    <text evidence="1">Belongs to the cation diffusion facilitator (CDF) transporter (TC 2.A.4) family. FieF subfamily.</text>
</comment>
<keyword id="KW-0997">Cell inner membrane</keyword>
<keyword id="KW-1003">Cell membrane</keyword>
<keyword id="KW-0406">Ion transport</keyword>
<keyword id="KW-0408">Iron</keyword>
<keyword id="KW-0410">Iron transport</keyword>
<keyword id="KW-0472">Membrane</keyword>
<keyword id="KW-0479">Metal-binding</keyword>
<keyword id="KW-0812">Transmembrane</keyword>
<keyword id="KW-1133">Transmembrane helix</keyword>
<keyword id="KW-0813">Transport</keyword>
<keyword id="KW-0862">Zinc</keyword>
<keyword id="KW-0864">Zinc transport</keyword>
<proteinExistence type="inferred from homology"/>
<reference key="1">
    <citation type="journal article" date="2009" name="PLoS ONE">
        <title>Salmonella paratyphi C: genetic divergence from Salmonella choleraesuis and pathogenic convergence with Salmonella typhi.</title>
        <authorList>
            <person name="Liu W.-Q."/>
            <person name="Feng Y."/>
            <person name="Wang Y."/>
            <person name="Zou Q.-H."/>
            <person name="Chen F."/>
            <person name="Guo J.-T."/>
            <person name="Peng Y.-H."/>
            <person name="Jin Y."/>
            <person name="Li Y.-G."/>
            <person name="Hu S.-N."/>
            <person name="Johnston R.N."/>
            <person name="Liu G.-R."/>
            <person name="Liu S.-L."/>
        </authorList>
    </citation>
    <scope>NUCLEOTIDE SEQUENCE [LARGE SCALE GENOMIC DNA]</scope>
    <source>
        <strain>RKS4594</strain>
    </source>
</reference>
<sequence>MNQTYGRLVSRAAIAATAMASALLLIKIFAWWYTGSVSILAALVDSLVDIAASLTNLLVVRYSLQPADDEHTFGHGKAESLAALAQSMFISGSALFLFLTSIQNLIKPTPMNDPGVGIGVTVIALICTIILVTFQRWVVRKTQSQAVRADMLHYQSDVMMNGAILIALGLSWYGWHRADALFALGIGIYILYSALRMGYEAVQSLLDRALPDAERQEIIDIVTSWPGVSGAHDLRTRQSGPTRFIQIHLEMEDNLPLVQAHFVADQVEQAILQRFPGSDVIIHQDPCSVVPREGRKFELV</sequence>
<feature type="chain" id="PRO_1000184875" description="Cation-efflux pump FieF">
    <location>
        <begin position="1"/>
        <end position="300"/>
    </location>
</feature>
<feature type="transmembrane region" description="Helical" evidence="1">
    <location>
        <begin position="24"/>
        <end position="44"/>
    </location>
</feature>
<feature type="transmembrane region" description="Helical" evidence="1">
    <location>
        <begin position="82"/>
        <end position="102"/>
    </location>
</feature>
<feature type="transmembrane region" description="Helical" evidence="1">
    <location>
        <begin position="114"/>
        <end position="134"/>
    </location>
</feature>
<feature type="transmembrane region" description="Helical" evidence="1">
    <location>
        <begin position="156"/>
        <end position="176"/>
    </location>
</feature>
<feature type="transmembrane region" description="Helical" evidence="1">
    <location>
        <begin position="178"/>
        <end position="198"/>
    </location>
</feature>
<feature type="binding site" evidence="1">
    <location>
        <position position="45"/>
    </location>
    <ligand>
        <name>Zn(2+)</name>
        <dbReference type="ChEBI" id="CHEBI:29105"/>
    </ligand>
</feature>
<feature type="binding site" evidence="1">
    <location>
        <position position="49"/>
    </location>
    <ligand>
        <name>Zn(2+)</name>
        <dbReference type="ChEBI" id="CHEBI:29105"/>
    </ligand>
</feature>
<feature type="binding site" evidence="1">
    <location>
        <position position="153"/>
    </location>
    <ligand>
        <name>Zn(2+)</name>
        <dbReference type="ChEBI" id="CHEBI:29105"/>
    </ligand>
</feature>
<feature type="binding site" evidence="1">
    <location>
        <position position="157"/>
    </location>
    <ligand>
        <name>Zn(2+)</name>
        <dbReference type="ChEBI" id="CHEBI:29105"/>
    </ligand>
</feature>
<evidence type="ECO:0000255" key="1">
    <source>
        <dbReference type="HAMAP-Rule" id="MF_01425"/>
    </source>
</evidence>
<organism>
    <name type="scientific">Salmonella paratyphi C (strain RKS4594)</name>
    <dbReference type="NCBI Taxonomy" id="476213"/>
    <lineage>
        <taxon>Bacteria</taxon>
        <taxon>Pseudomonadati</taxon>
        <taxon>Pseudomonadota</taxon>
        <taxon>Gammaproteobacteria</taxon>
        <taxon>Enterobacterales</taxon>
        <taxon>Enterobacteriaceae</taxon>
        <taxon>Salmonella</taxon>
    </lineage>
</organism>
<dbReference type="EMBL" id="CP000857">
    <property type="protein sequence ID" value="ACN48232.1"/>
    <property type="molecule type" value="Genomic_DNA"/>
</dbReference>
<dbReference type="RefSeq" id="WP_001077320.1">
    <property type="nucleotide sequence ID" value="NC_012125.1"/>
</dbReference>
<dbReference type="SMR" id="C0Q413"/>
<dbReference type="KEGG" id="sei:SPC_4168"/>
<dbReference type="HOGENOM" id="CLU_013430_3_0_6"/>
<dbReference type="Proteomes" id="UP000001599">
    <property type="component" value="Chromosome"/>
</dbReference>
<dbReference type="GO" id="GO:0005886">
    <property type="term" value="C:plasma membrane"/>
    <property type="evidence" value="ECO:0007669"/>
    <property type="project" value="UniProtKB-SubCell"/>
</dbReference>
<dbReference type="GO" id="GO:0015086">
    <property type="term" value="F:cadmium ion transmembrane transporter activity"/>
    <property type="evidence" value="ECO:0007669"/>
    <property type="project" value="UniProtKB-UniRule"/>
</dbReference>
<dbReference type="GO" id="GO:0015093">
    <property type="term" value="F:ferrous iron transmembrane transporter activity"/>
    <property type="evidence" value="ECO:0007669"/>
    <property type="project" value="TreeGrafter"/>
</dbReference>
<dbReference type="GO" id="GO:0046872">
    <property type="term" value="F:metal ion binding"/>
    <property type="evidence" value="ECO:0007669"/>
    <property type="project" value="UniProtKB-KW"/>
</dbReference>
<dbReference type="GO" id="GO:0015341">
    <property type="term" value="F:zinc efflux antiporter activity"/>
    <property type="evidence" value="ECO:0007669"/>
    <property type="project" value="TreeGrafter"/>
</dbReference>
<dbReference type="GO" id="GO:0006882">
    <property type="term" value="P:intracellular zinc ion homeostasis"/>
    <property type="evidence" value="ECO:0007669"/>
    <property type="project" value="TreeGrafter"/>
</dbReference>
<dbReference type="FunFam" id="1.20.1510.10:FF:000001">
    <property type="entry name" value="Ferrous-iron efflux pump FieF"/>
    <property type="match status" value="1"/>
</dbReference>
<dbReference type="FunFam" id="3.30.70.1350:FF:000002">
    <property type="entry name" value="Ferrous-iron efflux pump FieF"/>
    <property type="match status" value="1"/>
</dbReference>
<dbReference type="Gene3D" id="1.20.1510.10">
    <property type="entry name" value="Cation efflux protein transmembrane domain"/>
    <property type="match status" value="1"/>
</dbReference>
<dbReference type="Gene3D" id="3.30.70.1350">
    <property type="entry name" value="Cation efflux protein, cytoplasmic domain"/>
    <property type="match status" value="1"/>
</dbReference>
<dbReference type="HAMAP" id="MF_01425">
    <property type="entry name" value="Cation_efflux_FieF"/>
    <property type="match status" value="1"/>
</dbReference>
<dbReference type="InterPro" id="IPR002524">
    <property type="entry name" value="Cation_efflux"/>
</dbReference>
<dbReference type="InterPro" id="IPR027470">
    <property type="entry name" value="Cation_efflux_CTD"/>
</dbReference>
<dbReference type="InterPro" id="IPR036837">
    <property type="entry name" value="Cation_efflux_CTD_sf"/>
</dbReference>
<dbReference type="InterPro" id="IPR023783">
    <property type="entry name" value="Cation_efflux_FieF"/>
</dbReference>
<dbReference type="InterPro" id="IPR027469">
    <property type="entry name" value="Cation_efflux_TMD_sf"/>
</dbReference>
<dbReference type="InterPro" id="IPR050291">
    <property type="entry name" value="CDF_Transporter"/>
</dbReference>
<dbReference type="NCBIfam" id="TIGR01297">
    <property type="entry name" value="CDF"/>
    <property type="match status" value="1"/>
</dbReference>
<dbReference type="NCBIfam" id="NF007064">
    <property type="entry name" value="PRK09509.1"/>
    <property type="match status" value="1"/>
</dbReference>
<dbReference type="PANTHER" id="PTHR43840:SF41">
    <property type="entry name" value="CATION-EFFLUX PUMP FIEF"/>
    <property type="match status" value="1"/>
</dbReference>
<dbReference type="PANTHER" id="PTHR43840">
    <property type="entry name" value="MITOCHONDRIAL METAL TRANSPORTER 1-RELATED"/>
    <property type="match status" value="1"/>
</dbReference>
<dbReference type="Pfam" id="PF01545">
    <property type="entry name" value="Cation_efflux"/>
    <property type="match status" value="1"/>
</dbReference>
<dbReference type="Pfam" id="PF16916">
    <property type="entry name" value="ZT_dimer"/>
    <property type="match status" value="1"/>
</dbReference>
<dbReference type="SUPFAM" id="SSF160240">
    <property type="entry name" value="Cation efflux protein cytoplasmic domain-like"/>
    <property type="match status" value="1"/>
</dbReference>
<dbReference type="SUPFAM" id="SSF161111">
    <property type="entry name" value="Cation efflux protein transmembrane domain-like"/>
    <property type="match status" value="1"/>
</dbReference>
<accession>C0Q413</accession>
<name>FIEF_SALPC</name>